<comment type="function">
    <text evidence="1">Required for accurate and efficient protein synthesis under certain stress conditions. May act as a fidelity factor of the translation reaction, by catalyzing a one-codon backward translocation of tRNAs on improperly translocated ribosomes. Back-translocation proceeds from a post-translocation (POST) complex to a pre-translocation (PRE) complex, thus giving elongation factor G a second chance to translocate the tRNAs correctly. Binds to ribosomes in a GTP-dependent manner.</text>
</comment>
<comment type="catalytic activity">
    <reaction evidence="1">
        <text>GTP + H2O = GDP + phosphate + H(+)</text>
        <dbReference type="Rhea" id="RHEA:19669"/>
        <dbReference type="ChEBI" id="CHEBI:15377"/>
        <dbReference type="ChEBI" id="CHEBI:15378"/>
        <dbReference type="ChEBI" id="CHEBI:37565"/>
        <dbReference type="ChEBI" id="CHEBI:43474"/>
        <dbReference type="ChEBI" id="CHEBI:58189"/>
        <dbReference type="EC" id="3.6.5.n1"/>
    </reaction>
</comment>
<comment type="subcellular location">
    <subcellularLocation>
        <location evidence="1">Cell inner membrane</location>
        <topology evidence="1">Peripheral membrane protein</topology>
        <orientation evidence="1">Cytoplasmic side</orientation>
    </subcellularLocation>
</comment>
<comment type="similarity">
    <text evidence="1">Belongs to the TRAFAC class translation factor GTPase superfamily. Classic translation factor GTPase family. LepA subfamily.</text>
</comment>
<sequence>MKHIRNFSIIAHIDHGKSTLSDRLIQECGGLTDREMAAQVLDSMDIERERGITIKAQSVTLDYLANDGETYQLNFIDTPGHVDFSYEVSRSLAACEGALLVVDAGQGVEAQTLANCYTALEMDMDVVPVLNKIDLPQADPDRVAEEIEDIVGIEATDAVRCSAKTGVGIKDVLEVIVAQIPPPEGDPEGPLQALIIDSWFDSYLGVVSLVRIKNGVLKKGDKFKVMSTGQNYNADRVGIFTPKQTDTTELKTGEVGFVIAGIKEIHGAPVGDTLTHSKHGAEKALAGFKKVKPQVYAGLFPISTDDYENFRDALNKLSLNDASLFFEPETSSALGFGFRIGFLGLLHMEIIQERLEREYNLELITTAPTVVYEIVQTNGETIYVDNPSDLPAINNIAEMREPIVETNILVPKEYLGNVITLCIEKRGVQTNLVYHGNQVALTYELPMAEVVMDFFDRLKSTSRGYASLEYNFIRFEPADMVRLDILINGDRVDALAMIIHKGLIRSKGLALVNKMKELIPRQMFDIAVQAAVGSQIIARSSIKAMRKDVTAKCYGGDVSRKKKLLNKQKEGKKRMKQVGNVEVPQEAFLAVLKLND</sequence>
<accession>B0TIV5</accession>
<evidence type="ECO:0000255" key="1">
    <source>
        <dbReference type="HAMAP-Rule" id="MF_00071"/>
    </source>
</evidence>
<reference key="1">
    <citation type="submission" date="2008-01" db="EMBL/GenBank/DDBJ databases">
        <title>Complete sequence of Shewanella halifaxensis HAW-EB4.</title>
        <authorList>
            <consortium name="US DOE Joint Genome Institute"/>
            <person name="Copeland A."/>
            <person name="Lucas S."/>
            <person name="Lapidus A."/>
            <person name="Glavina del Rio T."/>
            <person name="Dalin E."/>
            <person name="Tice H."/>
            <person name="Bruce D."/>
            <person name="Goodwin L."/>
            <person name="Pitluck S."/>
            <person name="Sims D."/>
            <person name="Brettin T."/>
            <person name="Detter J.C."/>
            <person name="Han C."/>
            <person name="Kuske C.R."/>
            <person name="Schmutz J."/>
            <person name="Larimer F."/>
            <person name="Land M."/>
            <person name="Hauser L."/>
            <person name="Kyrpides N."/>
            <person name="Kim E."/>
            <person name="Zhao J.-S."/>
            <person name="Richardson P."/>
        </authorList>
    </citation>
    <scope>NUCLEOTIDE SEQUENCE [LARGE SCALE GENOMIC DNA]</scope>
    <source>
        <strain>HAW-EB4</strain>
    </source>
</reference>
<keyword id="KW-0997">Cell inner membrane</keyword>
<keyword id="KW-1003">Cell membrane</keyword>
<keyword id="KW-0342">GTP-binding</keyword>
<keyword id="KW-0378">Hydrolase</keyword>
<keyword id="KW-0472">Membrane</keyword>
<keyword id="KW-0547">Nucleotide-binding</keyword>
<keyword id="KW-0648">Protein biosynthesis</keyword>
<organism>
    <name type="scientific">Shewanella halifaxensis (strain HAW-EB4)</name>
    <dbReference type="NCBI Taxonomy" id="458817"/>
    <lineage>
        <taxon>Bacteria</taxon>
        <taxon>Pseudomonadati</taxon>
        <taxon>Pseudomonadota</taxon>
        <taxon>Gammaproteobacteria</taxon>
        <taxon>Alteromonadales</taxon>
        <taxon>Shewanellaceae</taxon>
        <taxon>Shewanella</taxon>
    </lineage>
</organism>
<feature type="chain" id="PRO_1000075147" description="Elongation factor 4">
    <location>
        <begin position="1"/>
        <end position="596"/>
    </location>
</feature>
<feature type="domain" description="tr-type G">
    <location>
        <begin position="2"/>
        <end position="184"/>
    </location>
</feature>
<feature type="binding site" evidence="1">
    <location>
        <begin position="14"/>
        <end position="19"/>
    </location>
    <ligand>
        <name>GTP</name>
        <dbReference type="ChEBI" id="CHEBI:37565"/>
    </ligand>
</feature>
<feature type="binding site" evidence="1">
    <location>
        <begin position="131"/>
        <end position="134"/>
    </location>
    <ligand>
        <name>GTP</name>
        <dbReference type="ChEBI" id="CHEBI:37565"/>
    </ligand>
</feature>
<gene>
    <name evidence="1" type="primary">lepA</name>
    <name type="ordered locus">Shal_1081</name>
</gene>
<proteinExistence type="inferred from homology"/>
<protein>
    <recommendedName>
        <fullName evidence="1">Elongation factor 4</fullName>
        <shortName evidence="1">EF-4</shortName>
        <ecNumber evidence="1">3.6.5.n1</ecNumber>
    </recommendedName>
    <alternativeName>
        <fullName evidence="1">Ribosomal back-translocase LepA</fullName>
    </alternativeName>
</protein>
<dbReference type="EC" id="3.6.5.n1" evidence="1"/>
<dbReference type="EMBL" id="CP000931">
    <property type="protein sequence ID" value="ABZ75650.1"/>
    <property type="molecule type" value="Genomic_DNA"/>
</dbReference>
<dbReference type="RefSeq" id="WP_012276196.1">
    <property type="nucleotide sequence ID" value="NC_010334.1"/>
</dbReference>
<dbReference type="SMR" id="B0TIV5"/>
<dbReference type="STRING" id="458817.Shal_1081"/>
<dbReference type="KEGG" id="shl:Shal_1081"/>
<dbReference type="eggNOG" id="COG0481">
    <property type="taxonomic scope" value="Bacteria"/>
</dbReference>
<dbReference type="HOGENOM" id="CLU_009995_3_3_6"/>
<dbReference type="OrthoDB" id="9804431at2"/>
<dbReference type="Proteomes" id="UP000001317">
    <property type="component" value="Chromosome"/>
</dbReference>
<dbReference type="GO" id="GO:0005886">
    <property type="term" value="C:plasma membrane"/>
    <property type="evidence" value="ECO:0007669"/>
    <property type="project" value="UniProtKB-SubCell"/>
</dbReference>
<dbReference type="GO" id="GO:0005525">
    <property type="term" value="F:GTP binding"/>
    <property type="evidence" value="ECO:0007669"/>
    <property type="project" value="UniProtKB-UniRule"/>
</dbReference>
<dbReference type="GO" id="GO:0003924">
    <property type="term" value="F:GTPase activity"/>
    <property type="evidence" value="ECO:0007669"/>
    <property type="project" value="UniProtKB-UniRule"/>
</dbReference>
<dbReference type="GO" id="GO:0097216">
    <property type="term" value="F:guanosine tetraphosphate binding"/>
    <property type="evidence" value="ECO:0007669"/>
    <property type="project" value="UniProtKB-ARBA"/>
</dbReference>
<dbReference type="GO" id="GO:0043022">
    <property type="term" value="F:ribosome binding"/>
    <property type="evidence" value="ECO:0007669"/>
    <property type="project" value="UniProtKB-UniRule"/>
</dbReference>
<dbReference type="GO" id="GO:0003746">
    <property type="term" value="F:translation elongation factor activity"/>
    <property type="evidence" value="ECO:0007669"/>
    <property type="project" value="UniProtKB-UniRule"/>
</dbReference>
<dbReference type="GO" id="GO:0045727">
    <property type="term" value="P:positive regulation of translation"/>
    <property type="evidence" value="ECO:0007669"/>
    <property type="project" value="UniProtKB-UniRule"/>
</dbReference>
<dbReference type="CDD" id="cd03699">
    <property type="entry name" value="EF4_II"/>
    <property type="match status" value="1"/>
</dbReference>
<dbReference type="CDD" id="cd16260">
    <property type="entry name" value="EF4_III"/>
    <property type="match status" value="1"/>
</dbReference>
<dbReference type="CDD" id="cd01890">
    <property type="entry name" value="LepA"/>
    <property type="match status" value="1"/>
</dbReference>
<dbReference type="CDD" id="cd03709">
    <property type="entry name" value="lepA_C"/>
    <property type="match status" value="1"/>
</dbReference>
<dbReference type="FunFam" id="3.40.50.300:FF:000078">
    <property type="entry name" value="Elongation factor 4"/>
    <property type="match status" value="1"/>
</dbReference>
<dbReference type="FunFam" id="2.40.30.10:FF:000015">
    <property type="entry name" value="Translation factor GUF1, mitochondrial"/>
    <property type="match status" value="1"/>
</dbReference>
<dbReference type="FunFam" id="3.30.70.240:FF:000007">
    <property type="entry name" value="Translation factor GUF1, mitochondrial"/>
    <property type="match status" value="1"/>
</dbReference>
<dbReference type="FunFam" id="3.30.70.2570:FF:000001">
    <property type="entry name" value="Translation factor GUF1, mitochondrial"/>
    <property type="match status" value="1"/>
</dbReference>
<dbReference type="FunFam" id="3.30.70.870:FF:000004">
    <property type="entry name" value="Translation factor GUF1, mitochondrial"/>
    <property type="match status" value="1"/>
</dbReference>
<dbReference type="Gene3D" id="3.30.70.240">
    <property type="match status" value="1"/>
</dbReference>
<dbReference type="Gene3D" id="3.30.70.2570">
    <property type="entry name" value="Elongation factor 4, C-terminal domain"/>
    <property type="match status" value="1"/>
</dbReference>
<dbReference type="Gene3D" id="3.30.70.870">
    <property type="entry name" value="Elongation Factor G (Translational Gtpase), domain 3"/>
    <property type="match status" value="1"/>
</dbReference>
<dbReference type="Gene3D" id="3.40.50.300">
    <property type="entry name" value="P-loop containing nucleotide triphosphate hydrolases"/>
    <property type="match status" value="1"/>
</dbReference>
<dbReference type="Gene3D" id="2.40.30.10">
    <property type="entry name" value="Translation factors"/>
    <property type="match status" value="1"/>
</dbReference>
<dbReference type="HAMAP" id="MF_00071">
    <property type="entry name" value="LepA"/>
    <property type="match status" value="1"/>
</dbReference>
<dbReference type="InterPro" id="IPR006297">
    <property type="entry name" value="EF-4"/>
</dbReference>
<dbReference type="InterPro" id="IPR035647">
    <property type="entry name" value="EFG_III/V"/>
</dbReference>
<dbReference type="InterPro" id="IPR000640">
    <property type="entry name" value="EFG_V-like"/>
</dbReference>
<dbReference type="InterPro" id="IPR004161">
    <property type="entry name" value="EFTu-like_2"/>
</dbReference>
<dbReference type="InterPro" id="IPR031157">
    <property type="entry name" value="G_TR_CS"/>
</dbReference>
<dbReference type="InterPro" id="IPR038363">
    <property type="entry name" value="LepA_C_sf"/>
</dbReference>
<dbReference type="InterPro" id="IPR013842">
    <property type="entry name" value="LepA_CTD"/>
</dbReference>
<dbReference type="InterPro" id="IPR035654">
    <property type="entry name" value="LepA_IV"/>
</dbReference>
<dbReference type="InterPro" id="IPR027417">
    <property type="entry name" value="P-loop_NTPase"/>
</dbReference>
<dbReference type="InterPro" id="IPR005225">
    <property type="entry name" value="Small_GTP-bd"/>
</dbReference>
<dbReference type="InterPro" id="IPR000795">
    <property type="entry name" value="T_Tr_GTP-bd_dom"/>
</dbReference>
<dbReference type="InterPro" id="IPR009000">
    <property type="entry name" value="Transl_B-barrel_sf"/>
</dbReference>
<dbReference type="NCBIfam" id="TIGR01393">
    <property type="entry name" value="lepA"/>
    <property type="match status" value="1"/>
</dbReference>
<dbReference type="NCBIfam" id="TIGR00231">
    <property type="entry name" value="small_GTP"/>
    <property type="match status" value="1"/>
</dbReference>
<dbReference type="PANTHER" id="PTHR43512:SF4">
    <property type="entry name" value="TRANSLATION FACTOR GUF1 HOMOLOG, CHLOROPLASTIC"/>
    <property type="match status" value="1"/>
</dbReference>
<dbReference type="PANTHER" id="PTHR43512">
    <property type="entry name" value="TRANSLATION FACTOR GUF1-RELATED"/>
    <property type="match status" value="1"/>
</dbReference>
<dbReference type="Pfam" id="PF00679">
    <property type="entry name" value="EFG_C"/>
    <property type="match status" value="1"/>
</dbReference>
<dbReference type="Pfam" id="PF00009">
    <property type="entry name" value="GTP_EFTU"/>
    <property type="match status" value="1"/>
</dbReference>
<dbReference type="Pfam" id="PF03144">
    <property type="entry name" value="GTP_EFTU_D2"/>
    <property type="match status" value="1"/>
</dbReference>
<dbReference type="Pfam" id="PF06421">
    <property type="entry name" value="LepA_C"/>
    <property type="match status" value="1"/>
</dbReference>
<dbReference type="PRINTS" id="PR00315">
    <property type="entry name" value="ELONGATNFCT"/>
</dbReference>
<dbReference type="SUPFAM" id="SSF54980">
    <property type="entry name" value="EF-G C-terminal domain-like"/>
    <property type="match status" value="2"/>
</dbReference>
<dbReference type="SUPFAM" id="SSF52540">
    <property type="entry name" value="P-loop containing nucleoside triphosphate hydrolases"/>
    <property type="match status" value="1"/>
</dbReference>
<dbReference type="SUPFAM" id="SSF50447">
    <property type="entry name" value="Translation proteins"/>
    <property type="match status" value="1"/>
</dbReference>
<dbReference type="PROSITE" id="PS00301">
    <property type="entry name" value="G_TR_1"/>
    <property type="match status" value="1"/>
</dbReference>
<dbReference type="PROSITE" id="PS51722">
    <property type="entry name" value="G_TR_2"/>
    <property type="match status" value="1"/>
</dbReference>
<name>LEPA_SHEHH</name>